<comment type="function">
    <text evidence="1">Probably functions as a manganese efflux pump.</text>
</comment>
<comment type="subcellular location">
    <subcellularLocation>
        <location evidence="1">Cell membrane</location>
        <topology evidence="1">Multi-pass membrane protein</topology>
    </subcellularLocation>
</comment>
<comment type="similarity">
    <text evidence="1">Belongs to the MntP (TC 9.B.29) family.</text>
</comment>
<accession>A7FTG8</accession>
<protein>
    <recommendedName>
        <fullName evidence="1">Putative manganese efflux pump MntP</fullName>
    </recommendedName>
</protein>
<organism>
    <name type="scientific">Clostridium botulinum (strain ATCC 19397 / Type A)</name>
    <dbReference type="NCBI Taxonomy" id="441770"/>
    <lineage>
        <taxon>Bacteria</taxon>
        <taxon>Bacillati</taxon>
        <taxon>Bacillota</taxon>
        <taxon>Clostridia</taxon>
        <taxon>Eubacteriales</taxon>
        <taxon>Clostridiaceae</taxon>
        <taxon>Clostridium</taxon>
    </lineage>
</organism>
<name>MNTP_CLOB1</name>
<reference key="1">
    <citation type="journal article" date="2007" name="PLoS ONE">
        <title>Analysis of the neurotoxin complex genes in Clostridium botulinum A1-A4 and B1 strains: BoNT/A3, /Ba4 and /B1 clusters are located within plasmids.</title>
        <authorList>
            <person name="Smith T.J."/>
            <person name="Hill K.K."/>
            <person name="Foley B.T."/>
            <person name="Detter J.C."/>
            <person name="Munk A.C."/>
            <person name="Bruce D.C."/>
            <person name="Doggett N.A."/>
            <person name="Smith L.A."/>
            <person name="Marks J.D."/>
            <person name="Xie G."/>
            <person name="Brettin T.S."/>
        </authorList>
    </citation>
    <scope>NUCLEOTIDE SEQUENCE [LARGE SCALE GENOMIC DNA]</scope>
    <source>
        <strain>ATCC 19397 / Type A</strain>
    </source>
</reference>
<proteinExistence type="inferred from homology"/>
<feature type="chain" id="PRO_1000068633" description="Putative manganese efflux pump MntP">
    <location>
        <begin position="1"/>
        <end position="201"/>
    </location>
</feature>
<feature type="transmembrane region" description="Helical" evidence="1">
    <location>
        <begin position="3"/>
        <end position="23"/>
    </location>
</feature>
<feature type="transmembrane region" description="Helical" evidence="1">
    <location>
        <begin position="39"/>
        <end position="59"/>
    </location>
</feature>
<feature type="transmembrane region" description="Helical" evidence="1">
    <location>
        <begin position="65"/>
        <end position="85"/>
    </location>
</feature>
<feature type="transmembrane region" description="Helical" evidence="1">
    <location>
        <begin position="116"/>
        <end position="136"/>
    </location>
</feature>
<feature type="transmembrane region" description="Helical" evidence="1">
    <location>
        <begin position="141"/>
        <end position="161"/>
    </location>
</feature>
<feature type="transmembrane region" description="Helical" evidence="1">
    <location>
        <begin position="176"/>
        <end position="196"/>
    </location>
</feature>
<sequence length="201" mass="21655">MDLISVILISIGLSMDAFAVSITNGAMISKVTASEGIRIGLFFGGFQALMPLIGWSIGIKFESYIAALDHWIALILLSIIGGKMIYDSVKENQDHKDEIACDYAAGEKKCLNNKTLILLAIATSIDALAVGVSFAFLKVSIINTIIIIGSITFVICFIGVMIGKKCGKLLKKRAEILGGVVLILIGVKIFIQHTNILSYIF</sequence>
<keyword id="KW-1003">Cell membrane</keyword>
<keyword id="KW-0406">Ion transport</keyword>
<keyword id="KW-0464">Manganese</keyword>
<keyword id="KW-0472">Membrane</keyword>
<keyword id="KW-0812">Transmembrane</keyword>
<keyword id="KW-1133">Transmembrane helix</keyword>
<keyword id="KW-0813">Transport</keyword>
<dbReference type="EMBL" id="CP000726">
    <property type="protein sequence ID" value="ABS35055.1"/>
    <property type="molecule type" value="Genomic_DNA"/>
</dbReference>
<dbReference type="RefSeq" id="WP_011948910.1">
    <property type="nucleotide sequence ID" value="NC_009697.1"/>
</dbReference>
<dbReference type="KEGG" id="cba:CLB_1318"/>
<dbReference type="HOGENOM" id="CLU_096410_3_0_9"/>
<dbReference type="GO" id="GO:0005886">
    <property type="term" value="C:plasma membrane"/>
    <property type="evidence" value="ECO:0007669"/>
    <property type="project" value="UniProtKB-SubCell"/>
</dbReference>
<dbReference type="GO" id="GO:0005384">
    <property type="term" value="F:manganese ion transmembrane transporter activity"/>
    <property type="evidence" value="ECO:0007669"/>
    <property type="project" value="UniProtKB-UniRule"/>
</dbReference>
<dbReference type="HAMAP" id="MF_01521">
    <property type="entry name" value="MntP_pump"/>
    <property type="match status" value="1"/>
</dbReference>
<dbReference type="InterPro" id="IPR036259">
    <property type="entry name" value="MFS_trans_sf"/>
</dbReference>
<dbReference type="InterPro" id="IPR003810">
    <property type="entry name" value="Mntp/YtaF"/>
</dbReference>
<dbReference type="InterPro" id="IPR022929">
    <property type="entry name" value="Put_MntP"/>
</dbReference>
<dbReference type="PANTHER" id="PTHR35529">
    <property type="entry name" value="MANGANESE EFFLUX PUMP MNTP-RELATED"/>
    <property type="match status" value="1"/>
</dbReference>
<dbReference type="PANTHER" id="PTHR35529:SF1">
    <property type="entry name" value="MANGANESE EFFLUX PUMP MNTP-RELATED"/>
    <property type="match status" value="1"/>
</dbReference>
<dbReference type="Pfam" id="PF02659">
    <property type="entry name" value="Mntp"/>
    <property type="match status" value="1"/>
</dbReference>
<dbReference type="SUPFAM" id="SSF103473">
    <property type="entry name" value="MFS general substrate transporter"/>
    <property type="match status" value="1"/>
</dbReference>
<gene>
    <name evidence="1" type="primary">mntP</name>
    <name type="ordered locus">CLB_1318</name>
</gene>
<evidence type="ECO:0000255" key="1">
    <source>
        <dbReference type="HAMAP-Rule" id="MF_01521"/>
    </source>
</evidence>